<comment type="function">
    <text evidence="2">Catalyzes the reversible phosphorolytic breakdown of the N-glycosidic bond in the beta-(deoxy)ribonucleoside molecules, with the formation of the corresponding free purine bases and pentose-1-phosphate.</text>
</comment>
<comment type="catalytic activity">
    <reaction evidence="2">
        <text>a purine D-ribonucleoside + phosphate = a purine nucleobase + alpha-D-ribose 1-phosphate</text>
        <dbReference type="Rhea" id="RHEA:19805"/>
        <dbReference type="ChEBI" id="CHEBI:26386"/>
        <dbReference type="ChEBI" id="CHEBI:43474"/>
        <dbReference type="ChEBI" id="CHEBI:57720"/>
        <dbReference type="ChEBI" id="CHEBI:142355"/>
        <dbReference type="EC" id="2.4.2.1"/>
    </reaction>
</comment>
<comment type="catalytic activity">
    <reaction evidence="2">
        <text>a purine 2'-deoxy-D-ribonucleoside + phosphate = a purine nucleobase + 2-deoxy-alpha-D-ribose 1-phosphate</text>
        <dbReference type="Rhea" id="RHEA:36431"/>
        <dbReference type="ChEBI" id="CHEBI:26386"/>
        <dbReference type="ChEBI" id="CHEBI:43474"/>
        <dbReference type="ChEBI" id="CHEBI:57259"/>
        <dbReference type="ChEBI" id="CHEBI:142361"/>
        <dbReference type="EC" id="2.4.2.1"/>
    </reaction>
</comment>
<comment type="subunit">
    <text evidence="2">Homohexamer; trimer of homodimers.</text>
</comment>
<comment type="similarity">
    <text evidence="2">Belongs to the PNP/UDP phosphorylase family.</text>
</comment>
<dbReference type="EC" id="2.4.2.1" evidence="2"/>
<dbReference type="EMBL" id="AM946015">
    <property type="protein sequence ID" value="CAR42331.1"/>
    <property type="molecule type" value="Genomic_DNA"/>
</dbReference>
<dbReference type="RefSeq" id="WP_012658542.1">
    <property type="nucleotide sequence ID" value="NC_012004.1"/>
</dbReference>
<dbReference type="SMR" id="B9DUK0"/>
<dbReference type="STRING" id="218495.SUB1046"/>
<dbReference type="KEGG" id="sub:SUB1046"/>
<dbReference type="eggNOG" id="COG0813">
    <property type="taxonomic scope" value="Bacteria"/>
</dbReference>
<dbReference type="HOGENOM" id="CLU_068457_2_0_9"/>
<dbReference type="OrthoDB" id="9782889at2"/>
<dbReference type="Proteomes" id="UP000000449">
    <property type="component" value="Chromosome"/>
</dbReference>
<dbReference type="GO" id="GO:0005829">
    <property type="term" value="C:cytosol"/>
    <property type="evidence" value="ECO:0007669"/>
    <property type="project" value="TreeGrafter"/>
</dbReference>
<dbReference type="GO" id="GO:0004731">
    <property type="term" value="F:purine-nucleoside phosphorylase activity"/>
    <property type="evidence" value="ECO:0007669"/>
    <property type="project" value="UniProtKB-UniRule"/>
</dbReference>
<dbReference type="GO" id="GO:0006152">
    <property type="term" value="P:purine nucleoside catabolic process"/>
    <property type="evidence" value="ECO:0007669"/>
    <property type="project" value="TreeGrafter"/>
</dbReference>
<dbReference type="CDD" id="cd09006">
    <property type="entry name" value="PNP_EcPNPI-like"/>
    <property type="match status" value="1"/>
</dbReference>
<dbReference type="Gene3D" id="3.40.50.1580">
    <property type="entry name" value="Nucleoside phosphorylase domain"/>
    <property type="match status" value="1"/>
</dbReference>
<dbReference type="HAMAP" id="MF_01627">
    <property type="entry name" value="Pur_nucleosid_phosp"/>
    <property type="match status" value="1"/>
</dbReference>
<dbReference type="InterPro" id="IPR004402">
    <property type="entry name" value="DeoD-type"/>
</dbReference>
<dbReference type="InterPro" id="IPR018016">
    <property type="entry name" value="Nucleoside_phosphorylase_CS"/>
</dbReference>
<dbReference type="InterPro" id="IPR000845">
    <property type="entry name" value="Nucleoside_phosphorylase_d"/>
</dbReference>
<dbReference type="InterPro" id="IPR035994">
    <property type="entry name" value="Nucleoside_phosphorylase_sf"/>
</dbReference>
<dbReference type="NCBIfam" id="TIGR00107">
    <property type="entry name" value="deoD"/>
    <property type="match status" value="1"/>
</dbReference>
<dbReference type="NCBIfam" id="NF004489">
    <property type="entry name" value="PRK05819.1"/>
    <property type="match status" value="1"/>
</dbReference>
<dbReference type="PANTHER" id="PTHR43691:SF11">
    <property type="entry name" value="FI09636P-RELATED"/>
    <property type="match status" value="1"/>
</dbReference>
<dbReference type="PANTHER" id="PTHR43691">
    <property type="entry name" value="URIDINE PHOSPHORYLASE"/>
    <property type="match status" value="1"/>
</dbReference>
<dbReference type="Pfam" id="PF01048">
    <property type="entry name" value="PNP_UDP_1"/>
    <property type="match status" value="1"/>
</dbReference>
<dbReference type="SUPFAM" id="SSF53167">
    <property type="entry name" value="Purine and uridine phosphorylases"/>
    <property type="match status" value="1"/>
</dbReference>
<dbReference type="PROSITE" id="PS01232">
    <property type="entry name" value="PNP_UDP_1"/>
    <property type="match status" value="1"/>
</dbReference>
<name>DEOD_STRU0</name>
<protein>
    <recommendedName>
        <fullName evidence="2">Purine nucleoside phosphorylase DeoD-type</fullName>
        <shortName evidence="2">PNP</shortName>
        <ecNumber evidence="2">2.4.2.1</ecNumber>
    </recommendedName>
</protein>
<gene>
    <name evidence="2" type="primary">deoD</name>
    <name type="ordered locus">SUB1046</name>
</gene>
<accession>B9DUK0</accession>
<proteinExistence type="inferred from homology"/>
<keyword id="KW-0328">Glycosyltransferase</keyword>
<keyword id="KW-1185">Reference proteome</keyword>
<keyword id="KW-0808">Transferase</keyword>
<sequence>MSIHISARVGDIADKILLPGDPLRAKFIAENFLEDAVCFNEIRGMLGYTGTYKGHRVSVMGTGMGMPSISIYARELIVDYGVKTLIRVGTAGSIDPNVHVRELVLAQAAATNSNIIRNDFPEFDFPQIADFGLLDIAYHIAKDLGMTTHVGSVLSSDVFYSNMPERNMALGKLGVKAIEMEAAALYYLAAQHQVKALGIMTISDNLNDPSEDTSAEERQTTFTDMMKVGLETLIAND</sequence>
<evidence type="ECO:0000250" key="1">
    <source>
        <dbReference type="UniProtKB" id="P50389"/>
    </source>
</evidence>
<evidence type="ECO:0000255" key="2">
    <source>
        <dbReference type="HAMAP-Rule" id="MF_01627"/>
    </source>
</evidence>
<organism>
    <name type="scientific">Streptococcus uberis (strain ATCC BAA-854 / 0140J)</name>
    <dbReference type="NCBI Taxonomy" id="218495"/>
    <lineage>
        <taxon>Bacteria</taxon>
        <taxon>Bacillati</taxon>
        <taxon>Bacillota</taxon>
        <taxon>Bacilli</taxon>
        <taxon>Lactobacillales</taxon>
        <taxon>Streptococcaceae</taxon>
        <taxon>Streptococcus</taxon>
    </lineage>
</organism>
<reference key="1">
    <citation type="journal article" date="2009" name="BMC Genomics">
        <title>Evidence for niche adaptation in the genome of the bovine pathogen Streptococcus uberis.</title>
        <authorList>
            <person name="Ward P.N."/>
            <person name="Holden M.T.G."/>
            <person name="Leigh J.A."/>
            <person name="Lennard N."/>
            <person name="Bignell A."/>
            <person name="Barron A."/>
            <person name="Clark L."/>
            <person name="Quail M.A."/>
            <person name="Woodward J."/>
            <person name="Barrell B.G."/>
            <person name="Egan S.A."/>
            <person name="Field T.R."/>
            <person name="Maskell D."/>
            <person name="Kehoe M."/>
            <person name="Dowson C.G."/>
            <person name="Chanter N."/>
            <person name="Whatmore A.M."/>
            <person name="Bentley S.D."/>
            <person name="Parkhill J."/>
        </authorList>
    </citation>
    <scope>NUCLEOTIDE SEQUENCE [LARGE SCALE GENOMIC DNA]</scope>
    <source>
        <strain>ATCC BAA-854 / 0140J</strain>
    </source>
</reference>
<feature type="chain" id="PRO_1000186237" description="Purine nucleoside phosphorylase DeoD-type">
    <location>
        <begin position="1"/>
        <end position="237"/>
    </location>
</feature>
<feature type="active site" description="Proton donor" evidence="2">
    <location>
        <position position="204"/>
    </location>
</feature>
<feature type="binding site" evidence="1">
    <location>
        <position position="4"/>
    </location>
    <ligand>
        <name>a purine D-ribonucleoside</name>
        <dbReference type="ChEBI" id="CHEBI:142355"/>
        <note>ligand shared between dimeric partners</note>
    </ligand>
</feature>
<feature type="binding site" description="in other chain" evidence="1">
    <location>
        <position position="20"/>
    </location>
    <ligand>
        <name>phosphate</name>
        <dbReference type="ChEBI" id="CHEBI:43474"/>
        <note>ligand shared between dimeric partners</note>
    </ligand>
</feature>
<feature type="binding site" description="in other chain" evidence="1">
    <location>
        <position position="24"/>
    </location>
    <ligand>
        <name>phosphate</name>
        <dbReference type="ChEBI" id="CHEBI:43474"/>
        <note>ligand shared between dimeric partners</note>
    </ligand>
</feature>
<feature type="binding site" evidence="1">
    <location>
        <position position="43"/>
    </location>
    <ligand>
        <name>phosphate</name>
        <dbReference type="ChEBI" id="CHEBI:43474"/>
        <note>ligand shared between dimeric partners</note>
    </ligand>
</feature>
<feature type="binding site" description="in other chain" evidence="1">
    <location>
        <begin position="87"/>
        <end position="90"/>
    </location>
    <ligand>
        <name>phosphate</name>
        <dbReference type="ChEBI" id="CHEBI:43474"/>
        <note>ligand shared between dimeric partners</note>
    </ligand>
</feature>
<feature type="binding site" description="in other chain" evidence="1">
    <location>
        <begin position="179"/>
        <end position="181"/>
    </location>
    <ligand>
        <name>a purine D-ribonucleoside</name>
        <dbReference type="ChEBI" id="CHEBI:142355"/>
        <note>ligand shared between dimeric partners</note>
    </ligand>
</feature>
<feature type="binding site" description="in other chain" evidence="1">
    <location>
        <begin position="203"/>
        <end position="204"/>
    </location>
    <ligand>
        <name>a purine D-ribonucleoside</name>
        <dbReference type="ChEBI" id="CHEBI:142355"/>
        <note>ligand shared between dimeric partners</note>
    </ligand>
</feature>
<feature type="site" description="Important for catalytic activity" evidence="2">
    <location>
        <position position="218"/>
    </location>
</feature>